<keyword id="KW-0012">Acyltransferase</keyword>
<keyword id="KW-1003">Cell membrane</keyword>
<keyword id="KW-0968">Cytoplasmic vesicle</keyword>
<keyword id="KW-0449">Lipoprotein</keyword>
<keyword id="KW-0472">Membrane</keyword>
<keyword id="KW-0564">Palmitate</keyword>
<keyword id="KW-1185">Reference proteome</keyword>
<keyword id="KW-0808">Transferase</keyword>
<keyword id="KW-0812">Transmembrane</keyword>
<keyword id="KW-1133">Transmembrane helix</keyword>
<proteinExistence type="evidence at transcript level"/>
<comment type="function">
    <text evidence="1 6">Palmitoyl acyltransferase.</text>
</comment>
<comment type="catalytic activity">
    <reaction>
        <text>L-cysteinyl-[protein] + hexadecanoyl-CoA = S-hexadecanoyl-L-cysteinyl-[protein] + CoA</text>
        <dbReference type="Rhea" id="RHEA:36683"/>
        <dbReference type="Rhea" id="RHEA-COMP:10131"/>
        <dbReference type="Rhea" id="RHEA-COMP:11032"/>
        <dbReference type="ChEBI" id="CHEBI:29950"/>
        <dbReference type="ChEBI" id="CHEBI:57287"/>
        <dbReference type="ChEBI" id="CHEBI:57379"/>
        <dbReference type="ChEBI" id="CHEBI:74151"/>
        <dbReference type="EC" id="2.3.1.225"/>
    </reaction>
</comment>
<comment type="subcellular location">
    <subcellularLocation>
        <location evidence="7">Cell membrane</location>
        <topology evidence="7">Multi-pass membrane protein</topology>
    </subcellularLocation>
    <subcellularLocation>
        <location evidence="7">Cytoplasmic vesicle membrane</location>
        <topology evidence="7">Multi-pass membrane protein</topology>
    </subcellularLocation>
</comment>
<comment type="developmental stage">
    <text evidence="5">Highly expressed during bolting.</text>
</comment>
<comment type="domain">
    <text evidence="1">The DHHC domain is required for palmitoyltransferase activity.</text>
</comment>
<comment type="similarity">
    <text evidence="7">Belongs to the DHHC palmitoyltransferase family.</text>
</comment>
<comment type="sequence caution" evidence="7">
    <conflict type="erroneous gene model prediction">
        <sequence resource="EMBL-CDS" id="AAG52492"/>
    </conflict>
</comment>
<comment type="sequence caution" evidence="7">
    <conflict type="erroneous gene model prediction">
        <sequence resource="EMBL-CDS" id="AAG60091"/>
    </conflict>
</comment>
<evidence type="ECO:0000250" key="1"/>
<evidence type="ECO:0000255" key="2"/>
<evidence type="ECO:0000255" key="3">
    <source>
        <dbReference type="PROSITE-ProRule" id="PRU00067"/>
    </source>
</evidence>
<evidence type="ECO:0000256" key="4">
    <source>
        <dbReference type="SAM" id="MobiDB-lite"/>
    </source>
</evidence>
<evidence type="ECO:0000269" key="5">
    <source>
    </source>
</evidence>
<evidence type="ECO:0000269" key="6">
    <source ref="4"/>
</evidence>
<evidence type="ECO:0000305" key="7"/>
<organism>
    <name type="scientific">Arabidopsis thaliana</name>
    <name type="common">Mouse-ear cress</name>
    <dbReference type="NCBI Taxonomy" id="3702"/>
    <lineage>
        <taxon>Eukaryota</taxon>
        <taxon>Viridiplantae</taxon>
        <taxon>Streptophyta</taxon>
        <taxon>Embryophyta</taxon>
        <taxon>Tracheophyta</taxon>
        <taxon>Spermatophyta</taxon>
        <taxon>Magnoliopsida</taxon>
        <taxon>eudicotyledons</taxon>
        <taxon>Gunneridae</taxon>
        <taxon>Pentapetalae</taxon>
        <taxon>rosids</taxon>
        <taxon>malvids</taxon>
        <taxon>Brassicales</taxon>
        <taxon>Brassicaceae</taxon>
        <taxon>Camelineae</taxon>
        <taxon>Arabidopsis</taxon>
    </lineage>
</organism>
<protein>
    <recommendedName>
        <fullName>Probable protein S-acyltransferase 22</fullName>
        <ecNumber>2.3.1.225</ecNumber>
    </recommendedName>
    <alternativeName>
        <fullName>Probable palmitoyltransferase At1g69420</fullName>
    </alternativeName>
    <alternativeName>
        <fullName>Zinc finger DHHC domain-containing protein At1g69420</fullName>
    </alternativeName>
</protein>
<gene>
    <name type="primary">PAT22</name>
    <name type="ordered locus">At1g69420</name>
    <name type="ORF">F10D13.9</name>
    <name type="ORF">F23O10.1</name>
</gene>
<accession>Q9C533</accession>
<dbReference type="EC" id="2.3.1.225"/>
<dbReference type="EMBL" id="AC018364">
    <property type="protein sequence ID" value="AAG52492.1"/>
    <property type="status" value="ALT_SEQ"/>
    <property type="molecule type" value="Genomic_DNA"/>
</dbReference>
<dbReference type="EMBL" id="AC073178">
    <property type="protein sequence ID" value="AAG60091.1"/>
    <property type="status" value="ALT_SEQ"/>
    <property type="molecule type" value="Genomic_DNA"/>
</dbReference>
<dbReference type="EMBL" id="CP002684">
    <property type="protein sequence ID" value="AEE34922.1"/>
    <property type="molecule type" value="Genomic_DNA"/>
</dbReference>
<dbReference type="EMBL" id="CP002684">
    <property type="protein sequence ID" value="AEE34923.1"/>
    <property type="molecule type" value="Genomic_DNA"/>
</dbReference>
<dbReference type="EMBL" id="BX814193">
    <property type="status" value="NOT_ANNOTATED_CDS"/>
    <property type="molecule type" value="mRNA"/>
</dbReference>
<dbReference type="RefSeq" id="NP_177101.2">
    <property type="nucleotide sequence ID" value="NM_105609.4"/>
</dbReference>
<dbReference type="RefSeq" id="NP_974114.1">
    <property type="nucleotide sequence ID" value="NM_202385.2"/>
</dbReference>
<dbReference type="BioGRID" id="28495">
    <property type="interactions" value="1"/>
</dbReference>
<dbReference type="FunCoup" id="Q9C533">
    <property type="interactions" value="753"/>
</dbReference>
<dbReference type="IntAct" id="Q9C533">
    <property type="interactions" value="1"/>
</dbReference>
<dbReference type="STRING" id="3702.Q9C533"/>
<dbReference type="iPTMnet" id="Q9C533"/>
<dbReference type="PaxDb" id="3702-AT1G69420.1"/>
<dbReference type="ProteomicsDB" id="242959"/>
<dbReference type="EnsemblPlants" id="AT1G69420.1">
    <property type="protein sequence ID" value="AT1G69420.1"/>
    <property type="gene ID" value="AT1G69420"/>
</dbReference>
<dbReference type="EnsemblPlants" id="AT1G69420.2">
    <property type="protein sequence ID" value="AT1G69420.2"/>
    <property type="gene ID" value="AT1G69420"/>
</dbReference>
<dbReference type="GeneID" id="843274"/>
<dbReference type="Gramene" id="AT1G69420.1">
    <property type="protein sequence ID" value="AT1G69420.1"/>
    <property type="gene ID" value="AT1G69420"/>
</dbReference>
<dbReference type="Gramene" id="AT1G69420.2">
    <property type="protein sequence ID" value="AT1G69420.2"/>
    <property type="gene ID" value="AT1G69420"/>
</dbReference>
<dbReference type="KEGG" id="ath:AT1G69420"/>
<dbReference type="Araport" id="AT1G69420"/>
<dbReference type="TAIR" id="AT1G69420"/>
<dbReference type="eggNOG" id="KOG1311">
    <property type="taxonomic scope" value="Eukaryota"/>
</dbReference>
<dbReference type="HOGENOM" id="CLU_020283_2_0_1"/>
<dbReference type="InParanoid" id="Q9C533"/>
<dbReference type="OMA" id="EIGMPQN"/>
<dbReference type="PhylomeDB" id="Q9C533"/>
<dbReference type="BRENDA" id="2.3.1.225">
    <property type="organism ID" value="399"/>
</dbReference>
<dbReference type="PRO" id="PR:Q9C533"/>
<dbReference type="Proteomes" id="UP000006548">
    <property type="component" value="Chromosome 1"/>
</dbReference>
<dbReference type="ExpressionAtlas" id="Q9C533">
    <property type="expression patterns" value="baseline and differential"/>
</dbReference>
<dbReference type="GO" id="GO:0030659">
    <property type="term" value="C:cytoplasmic vesicle membrane"/>
    <property type="evidence" value="ECO:0007669"/>
    <property type="project" value="UniProtKB-SubCell"/>
</dbReference>
<dbReference type="GO" id="GO:0005886">
    <property type="term" value="C:plasma membrane"/>
    <property type="evidence" value="ECO:0007669"/>
    <property type="project" value="UniProtKB-SubCell"/>
</dbReference>
<dbReference type="GO" id="GO:0019706">
    <property type="term" value="F:protein-cysteine S-palmitoyltransferase activity"/>
    <property type="evidence" value="ECO:0007669"/>
    <property type="project" value="UniProtKB-EC"/>
</dbReference>
<dbReference type="InterPro" id="IPR001594">
    <property type="entry name" value="Palmitoyltrfase_DHHC"/>
</dbReference>
<dbReference type="InterPro" id="IPR039859">
    <property type="entry name" value="PFA4/ZDH16/20/ERF2-like"/>
</dbReference>
<dbReference type="PANTHER" id="PTHR22883:SF265">
    <property type="entry name" value="PROTEIN S-ACYLTRANSFERASE 22-RELATED"/>
    <property type="match status" value="1"/>
</dbReference>
<dbReference type="PANTHER" id="PTHR22883">
    <property type="entry name" value="ZINC FINGER DHHC DOMAIN CONTAINING PROTEIN"/>
    <property type="match status" value="1"/>
</dbReference>
<dbReference type="Pfam" id="PF01529">
    <property type="entry name" value="DHHC"/>
    <property type="match status" value="1"/>
</dbReference>
<dbReference type="PROSITE" id="PS50216">
    <property type="entry name" value="DHHC"/>
    <property type="match status" value="1"/>
</dbReference>
<feature type="chain" id="PRO_0000363589" description="Probable protein S-acyltransferase 22">
    <location>
        <begin position="1"/>
        <end position="596"/>
    </location>
</feature>
<feature type="transmembrane region" description="Helical" evidence="2">
    <location>
        <begin position="15"/>
        <end position="35"/>
    </location>
</feature>
<feature type="transmembrane region" description="Helical" evidence="2">
    <location>
        <begin position="44"/>
        <end position="64"/>
    </location>
</feature>
<feature type="transmembrane region" description="Helical" evidence="2">
    <location>
        <begin position="215"/>
        <end position="235"/>
    </location>
</feature>
<feature type="transmembrane region" description="Helical" evidence="2">
    <location>
        <begin position="254"/>
        <end position="274"/>
    </location>
</feature>
<feature type="domain" description="DHHC" evidence="3">
    <location>
        <begin position="163"/>
        <end position="213"/>
    </location>
</feature>
<feature type="region of interest" description="Disordered" evidence="4">
    <location>
        <begin position="102"/>
        <end position="125"/>
    </location>
</feature>
<feature type="region of interest" description="Disordered" evidence="4">
    <location>
        <begin position="433"/>
        <end position="455"/>
    </location>
</feature>
<feature type="region of interest" description="Disordered" evidence="4">
    <location>
        <begin position="498"/>
        <end position="523"/>
    </location>
</feature>
<feature type="region of interest" description="Disordered" evidence="4">
    <location>
        <begin position="549"/>
        <end position="596"/>
    </location>
</feature>
<feature type="compositionally biased region" description="Polar residues" evidence="4">
    <location>
        <begin position="498"/>
        <end position="518"/>
    </location>
</feature>
<feature type="compositionally biased region" description="Low complexity" evidence="4">
    <location>
        <begin position="549"/>
        <end position="571"/>
    </location>
</feature>
<feature type="active site" description="S-palmitoyl cysteine intermediate" evidence="1">
    <location>
        <position position="193"/>
    </location>
</feature>
<reference key="1">
    <citation type="journal article" date="2000" name="Nature">
        <title>Sequence and analysis of chromosome 1 of the plant Arabidopsis thaliana.</title>
        <authorList>
            <person name="Theologis A."/>
            <person name="Ecker J.R."/>
            <person name="Palm C.J."/>
            <person name="Federspiel N.A."/>
            <person name="Kaul S."/>
            <person name="White O."/>
            <person name="Alonso J."/>
            <person name="Altafi H."/>
            <person name="Araujo R."/>
            <person name="Bowman C.L."/>
            <person name="Brooks S.Y."/>
            <person name="Buehler E."/>
            <person name="Chan A."/>
            <person name="Chao Q."/>
            <person name="Chen H."/>
            <person name="Cheuk R.F."/>
            <person name="Chin C.W."/>
            <person name="Chung M.K."/>
            <person name="Conn L."/>
            <person name="Conway A.B."/>
            <person name="Conway A.R."/>
            <person name="Creasy T.H."/>
            <person name="Dewar K."/>
            <person name="Dunn P."/>
            <person name="Etgu P."/>
            <person name="Feldblyum T.V."/>
            <person name="Feng J.-D."/>
            <person name="Fong B."/>
            <person name="Fujii C.Y."/>
            <person name="Gill J.E."/>
            <person name="Goldsmith A.D."/>
            <person name="Haas B."/>
            <person name="Hansen N.F."/>
            <person name="Hughes B."/>
            <person name="Huizar L."/>
            <person name="Hunter J.L."/>
            <person name="Jenkins J."/>
            <person name="Johnson-Hopson C."/>
            <person name="Khan S."/>
            <person name="Khaykin E."/>
            <person name="Kim C.J."/>
            <person name="Koo H.L."/>
            <person name="Kremenetskaia I."/>
            <person name="Kurtz D.B."/>
            <person name="Kwan A."/>
            <person name="Lam B."/>
            <person name="Langin-Hooper S."/>
            <person name="Lee A."/>
            <person name="Lee J.M."/>
            <person name="Lenz C.A."/>
            <person name="Li J.H."/>
            <person name="Li Y.-P."/>
            <person name="Lin X."/>
            <person name="Liu S.X."/>
            <person name="Liu Z.A."/>
            <person name="Luros J.S."/>
            <person name="Maiti R."/>
            <person name="Marziali A."/>
            <person name="Militscher J."/>
            <person name="Miranda M."/>
            <person name="Nguyen M."/>
            <person name="Nierman W.C."/>
            <person name="Osborne B.I."/>
            <person name="Pai G."/>
            <person name="Peterson J."/>
            <person name="Pham P.K."/>
            <person name="Rizzo M."/>
            <person name="Rooney T."/>
            <person name="Rowley D."/>
            <person name="Sakano H."/>
            <person name="Salzberg S.L."/>
            <person name="Schwartz J.R."/>
            <person name="Shinn P."/>
            <person name="Southwick A.M."/>
            <person name="Sun H."/>
            <person name="Tallon L.J."/>
            <person name="Tambunga G."/>
            <person name="Toriumi M.J."/>
            <person name="Town C.D."/>
            <person name="Utterback T."/>
            <person name="Van Aken S."/>
            <person name="Vaysberg M."/>
            <person name="Vysotskaia V.S."/>
            <person name="Walker M."/>
            <person name="Wu D."/>
            <person name="Yu G."/>
            <person name="Fraser C.M."/>
            <person name="Venter J.C."/>
            <person name="Davis R.W."/>
        </authorList>
    </citation>
    <scope>NUCLEOTIDE SEQUENCE [LARGE SCALE GENOMIC DNA]</scope>
    <source>
        <strain>cv. Columbia</strain>
    </source>
</reference>
<reference key="2">
    <citation type="journal article" date="2017" name="Plant J.">
        <title>Araport11: a complete reannotation of the Arabidopsis thaliana reference genome.</title>
        <authorList>
            <person name="Cheng C.Y."/>
            <person name="Krishnakumar V."/>
            <person name="Chan A.P."/>
            <person name="Thibaud-Nissen F."/>
            <person name="Schobel S."/>
            <person name="Town C.D."/>
        </authorList>
    </citation>
    <scope>GENOME REANNOTATION</scope>
    <source>
        <strain>cv. Columbia</strain>
    </source>
</reference>
<reference key="3">
    <citation type="journal article" date="2004" name="Genome Res.">
        <title>Whole genome sequence comparisons and 'full-length' cDNA sequences: a combined approach to evaluate and improve Arabidopsis genome annotation.</title>
        <authorList>
            <person name="Castelli V."/>
            <person name="Aury J.-M."/>
            <person name="Jaillon O."/>
            <person name="Wincker P."/>
            <person name="Clepet C."/>
            <person name="Menard M."/>
            <person name="Cruaud C."/>
            <person name="Quetier F."/>
            <person name="Scarpelli C."/>
            <person name="Schaechter V."/>
            <person name="Temple G."/>
            <person name="Caboche M."/>
            <person name="Weissenbach J."/>
            <person name="Salanoubat M."/>
        </authorList>
    </citation>
    <scope>NUCLEOTIDE SEQUENCE [LARGE SCALE MRNA]</scope>
    <source>
        <strain>cv. Columbia</strain>
    </source>
</reference>
<reference key="4">
    <citation type="book" date="2007" name="Proceedings of the 18th international conference on Arabidopsis research">
        <title>S-acylation: dynamic control of plant development and sigalling by lipid modification of proteins.</title>
        <authorList>
            <person name="Hemsley P.A."/>
            <person name="Taylor L."/>
            <person name="Grierson C.S."/>
        </authorList>
    </citation>
    <scope>GENE FAMILY</scope>
    <scope>FUNCTION</scope>
</reference>
<reference key="5">
    <citation type="journal article" date="2012" name="Plant Physiol.">
        <title>Genomics and localization of the Arabidopsis DHHC-cysteine-rich domain S-acyltransferase protein family.</title>
        <authorList>
            <person name="Batistic O."/>
        </authorList>
    </citation>
    <scope>SUBCELLULAR LOCATION</scope>
    <scope>DEVELOPMENTAL STAGE</scope>
    <scope>GENE FAMILY</scope>
    <scope>NOMENCLATURE</scope>
</reference>
<sequence>MRKHGWQLPYHPLQVVAVAVFLALGFAFYVFFAPFVGKKIHQYIAMGIYTPLITCVVGLYIWCAASDPADRGVFRSKKYLKIPENGKFPLAKDIKDGCGSATGGAKSHDGTCVEDTENGSNKKLESSERSSLLRLLCSPCALLCSCCSGKDESSEQMSEDGMFYCSLCEVEVFKYSKHCRVCDKCVDRFDHHCRWLNNCIGKRNYRKFFSLMVSAIFLLIMQWSTGIFVLVLCLLRRNQFNADIALKLGSSFSLIPFVIVVGVCTVLAMLATLPLAQLFFFHILLIKKGISTYDYIVALREQEQELEAGGGQQSPQMSMISSFTGLSSASSFNTFHRGAWCTPPRLFLEDQFDVVPPENASVSSYGKKSVVEERVKKKPQPVKISPWTLARLNAEEVSKAAAEARKKSKIIQPVARRENPFVGLEASSSFGSSGRRMFPTKYEGVNNNGKQRRQSKRIRLPAELPLEPLMNVQTKAAMETSTSSGLAPLQLEARSAFQTSRAMSGSGNVMVTSSPESSLDSHDIHPFRVSSEAEDAAQLNGFSSAVGLMGQQRGQQQQQQLSMMMMPLSRSTSDGYDASGGEDSDQVPSRNIHKSR</sequence>
<name>ZDHC1_ARATH</name>